<keyword id="KW-0067">ATP-binding</keyword>
<keyword id="KW-1003">Cell membrane</keyword>
<keyword id="KW-0472">Membrane</keyword>
<keyword id="KW-0547">Nucleotide-binding</keyword>
<keyword id="KW-0592">Phosphate transport</keyword>
<keyword id="KW-1278">Translocase</keyword>
<keyword id="KW-0813">Transport</keyword>
<reference key="1">
    <citation type="journal article" date="2005" name="Proc. Natl. Acad. Sci. U.S.A.">
        <title>Genome analysis of multiple pathogenic isolates of Streptococcus agalactiae: implications for the microbial 'pan-genome'.</title>
        <authorList>
            <person name="Tettelin H."/>
            <person name="Masignani V."/>
            <person name="Cieslewicz M.J."/>
            <person name="Donati C."/>
            <person name="Medini D."/>
            <person name="Ward N.L."/>
            <person name="Angiuoli S.V."/>
            <person name="Crabtree J."/>
            <person name="Jones A.L."/>
            <person name="Durkin A.S."/>
            <person name="DeBoy R.T."/>
            <person name="Davidsen T.M."/>
            <person name="Mora M."/>
            <person name="Scarselli M."/>
            <person name="Margarit y Ros I."/>
            <person name="Peterson J.D."/>
            <person name="Hauser C.R."/>
            <person name="Sundaram J.P."/>
            <person name="Nelson W.C."/>
            <person name="Madupu R."/>
            <person name="Brinkac L.M."/>
            <person name="Dodson R.J."/>
            <person name="Rosovitz M.J."/>
            <person name="Sullivan S.A."/>
            <person name="Daugherty S.C."/>
            <person name="Haft D.H."/>
            <person name="Selengut J."/>
            <person name="Gwinn M.L."/>
            <person name="Zhou L."/>
            <person name="Zafar N."/>
            <person name="Khouri H."/>
            <person name="Radune D."/>
            <person name="Dimitrov G."/>
            <person name="Watkins K."/>
            <person name="O'Connor K.J."/>
            <person name="Smith S."/>
            <person name="Utterback T.R."/>
            <person name="White O."/>
            <person name="Rubens C.E."/>
            <person name="Grandi G."/>
            <person name="Madoff L.C."/>
            <person name="Kasper D.L."/>
            <person name="Telford J.L."/>
            <person name="Wessels M.R."/>
            <person name="Rappuoli R."/>
            <person name="Fraser C.M."/>
        </authorList>
    </citation>
    <scope>NUCLEOTIDE SEQUENCE [LARGE SCALE GENOMIC DNA]</scope>
    <source>
        <strain>ATCC 27591 / A909 / CDC SS700</strain>
    </source>
</reference>
<proteinExistence type="inferred from homology"/>
<accession>Q3K198</accession>
<feature type="chain" id="PRO_0000272539" description="Phosphate import ATP-binding protein PstB 2">
    <location>
        <begin position="1"/>
        <end position="267"/>
    </location>
</feature>
<feature type="domain" description="ABC transporter" evidence="1">
    <location>
        <begin position="21"/>
        <end position="262"/>
    </location>
</feature>
<feature type="binding site" evidence="1">
    <location>
        <begin position="53"/>
        <end position="60"/>
    </location>
    <ligand>
        <name>ATP</name>
        <dbReference type="ChEBI" id="CHEBI:30616"/>
    </ligand>
</feature>
<evidence type="ECO:0000255" key="1">
    <source>
        <dbReference type="HAMAP-Rule" id="MF_01702"/>
    </source>
</evidence>
<name>PSTB2_STRA1</name>
<sequence>MAEYNWDERHIITFPEENSALTTKDLHVYYGEKEAIKGIDMQFEKNKITALIGPSGCGKSTYLRSLNRMNDTIDIARVTGQIMYEGIDVNAQDINVYEMRKHIGMVFQRPNPFAKSIYKNITFAYERAGVKDKKFLDEVVETSLKQAALWDQVKDDLHKSAFTLSGGQQQRLCIARAIAVKPEILLMDEPASALDPIATMQLEETMFELKKNYTIIIVTHNMQQAARASDYTAFFYLGDLIEYDKTNNIFQNAKCQSTSDYVSGRFG</sequence>
<organism>
    <name type="scientific">Streptococcus agalactiae serotype Ia (strain ATCC 27591 / A909 / CDC SS700)</name>
    <dbReference type="NCBI Taxonomy" id="205921"/>
    <lineage>
        <taxon>Bacteria</taxon>
        <taxon>Bacillati</taxon>
        <taxon>Bacillota</taxon>
        <taxon>Bacilli</taxon>
        <taxon>Lactobacillales</taxon>
        <taxon>Streptococcaceae</taxon>
        <taxon>Streptococcus</taxon>
    </lineage>
</organism>
<comment type="function">
    <text evidence="1">Part of the ABC transporter complex PstSACB involved in phosphate import. Responsible for energy coupling to the transport system.</text>
</comment>
<comment type="catalytic activity">
    <reaction evidence="1">
        <text>phosphate(out) + ATP + H2O = ADP + 2 phosphate(in) + H(+)</text>
        <dbReference type="Rhea" id="RHEA:24440"/>
        <dbReference type="ChEBI" id="CHEBI:15377"/>
        <dbReference type="ChEBI" id="CHEBI:15378"/>
        <dbReference type="ChEBI" id="CHEBI:30616"/>
        <dbReference type="ChEBI" id="CHEBI:43474"/>
        <dbReference type="ChEBI" id="CHEBI:456216"/>
        <dbReference type="EC" id="7.3.2.1"/>
    </reaction>
</comment>
<comment type="subunit">
    <text evidence="1">The complex is composed of two ATP-binding proteins (PstB), two transmembrane proteins (PstC and PstA) and a solute-binding protein (PstS).</text>
</comment>
<comment type="subcellular location">
    <subcellularLocation>
        <location evidence="1">Cell membrane</location>
        <topology evidence="1">Peripheral membrane protein</topology>
    </subcellularLocation>
</comment>
<comment type="similarity">
    <text evidence="1">Belongs to the ABC transporter superfamily. Phosphate importer (TC 3.A.1.7) family.</text>
</comment>
<dbReference type="EC" id="7.3.2.1" evidence="1"/>
<dbReference type="EMBL" id="CP000114">
    <property type="protein sequence ID" value="ABA46131.1"/>
    <property type="molecule type" value="Genomic_DNA"/>
</dbReference>
<dbReference type="SMR" id="Q3K198"/>
<dbReference type="KEGG" id="sak:SAK_1084"/>
<dbReference type="HOGENOM" id="CLU_000604_1_22_9"/>
<dbReference type="GO" id="GO:0005886">
    <property type="term" value="C:plasma membrane"/>
    <property type="evidence" value="ECO:0007669"/>
    <property type="project" value="UniProtKB-SubCell"/>
</dbReference>
<dbReference type="GO" id="GO:0005524">
    <property type="term" value="F:ATP binding"/>
    <property type="evidence" value="ECO:0007669"/>
    <property type="project" value="UniProtKB-KW"/>
</dbReference>
<dbReference type="GO" id="GO:0016887">
    <property type="term" value="F:ATP hydrolysis activity"/>
    <property type="evidence" value="ECO:0007669"/>
    <property type="project" value="InterPro"/>
</dbReference>
<dbReference type="GO" id="GO:0015415">
    <property type="term" value="F:ATPase-coupled phosphate ion transmembrane transporter activity"/>
    <property type="evidence" value="ECO:0007669"/>
    <property type="project" value="UniProtKB-EC"/>
</dbReference>
<dbReference type="GO" id="GO:0035435">
    <property type="term" value="P:phosphate ion transmembrane transport"/>
    <property type="evidence" value="ECO:0007669"/>
    <property type="project" value="InterPro"/>
</dbReference>
<dbReference type="CDD" id="cd03260">
    <property type="entry name" value="ABC_PstB_phosphate_transporter"/>
    <property type="match status" value="1"/>
</dbReference>
<dbReference type="Gene3D" id="3.40.50.300">
    <property type="entry name" value="P-loop containing nucleotide triphosphate hydrolases"/>
    <property type="match status" value="1"/>
</dbReference>
<dbReference type="InterPro" id="IPR003593">
    <property type="entry name" value="AAA+_ATPase"/>
</dbReference>
<dbReference type="InterPro" id="IPR003439">
    <property type="entry name" value="ABC_transporter-like_ATP-bd"/>
</dbReference>
<dbReference type="InterPro" id="IPR017871">
    <property type="entry name" value="ABC_transporter-like_CS"/>
</dbReference>
<dbReference type="InterPro" id="IPR027417">
    <property type="entry name" value="P-loop_NTPase"/>
</dbReference>
<dbReference type="InterPro" id="IPR005670">
    <property type="entry name" value="PstB-like"/>
</dbReference>
<dbReference type="NCBIfam" id="TIGR00972">
    <property type="entry name" value="3a0107s01c2"/>
    <property type="match status" value="1"/>
</dbReference>
<dbReference type="PANTHER" id="PTHR43423">
    <property type="entry name" value="ABC TRANSPORTER I FAMILY MEMBER 17"/>
    <property type="match status" value="1"/>
</dbReference>
<dbReference type="PANTHER" id="PTHR43423:SF10">
    <property type="entry name" value="PHOSPHATE IMPORT ATP-BINDING PROTEIN PSTB 2"/>
    <property type="match status" value="1"/>
</dbReference>
<dbReference type="Pfam" id="PF00005">
    <property type="entry name" value="ABC_tran"/>
    <property type="match status" value="1"/>
</dbReference>
<dbReference type="SMART" id="SM00382">
    <property type="entry name" value="AAA"/>
    <property type="match status" value="1"/>
</dbReference>
<dbReference type="SUPFAM" id="SSF52540">
    <property type="entry name" value="P-loop containing nucleoside triphosphate hydrolases"/>
    <property type="match status" value="1"/>
</dbReference>
<dbReference type="PROSITE" id="PS00211">
    <property type="entry name" value="ABC_TRANSPORTER_1"/>
    <property type="match status" value="1"/>
</dbReference>
<dbReference type="PROSITE" id="PS50893">
    <property type="entry name" value="ABC_TRANSPORTER_2"/>
    <property type="match status" value="1"/>
</dbReference>
<dbReference type="PROSITE" id="PS51238">
    <property type="entry name" value="PSTB"/>
    <property type="match status" value="1"/>
</dbReference>
<gene>
    <name evidence="1" type="primary">pstB2</name>
    <name type="ordered locus">SAK_1084</name>
</gene>
<protein>
    <recommendedName>
        <fullName evidence="1">Phosphate import ATP-binding protein PstB 2</fullName>
        <ecNumber evidence="1">7.3.2.1</ecNumber>
    </recommendedName>
    <alternativeName>
        <fullName evidence="1">ABC phosphate transporter 2</fullName>
    </alternativeName>
    <alternativeName>
        <fullName evidence="1">Phosphate-transporting ATPase 2</fullName>
    </alternativeName>
</protein>